<organism>
    <name type="scientific">Drosophila melanogaster</name>
    <name type="common">Fruit fly</name>
    <dbReference type="NCBI Taxonomy" id="7227"/>
    <lineage>
        <taxon>Eukaryota</taxon>
        <taxon>Metazoa</taxon>
        <taxon>Ecdysozoa</taxon>
        <taxon>Arthropoda</taxon>
        <taxon>Hexapoda</taxon>
        <taxon>Insecta</taxon>
        <taxon>Pterygota</taxon>
        <taxon>Neoptera</taxon>
        <taxon>Endopterygota</taxon>
        <taxon>Diptera</taxon>
        <taxon>Brachycera</taxon>
        <taxon>Muscomorpha</taxon>
        <taxon>Ephydroidea</taxon>
        <taxon>Drosophilidae</taxon>
        <taxon>Drosophila</taxon>
        <taxon>Sophophora</taxon>
    </lineage>
</organism>
<keyword id="KW-0025">Alternative splicing</keyword>
<keyword id="KW-0256">Endoplasmic reticulum</keyword>
<keyword id="KW-0349">Heme</keyword>
<keyword id="KW-0408">Iron</keyword>
<keyword id="KW-0472">Membrane</keyword>
<keyword id="KW-0479">Metal-binding</keyword>
<keyword id="KW-0492">Microsome</keyword>
<keyword id="KW-0503">Monooxygenase</keyword>
<keyword id="KW-0560">Oxidoreductase</keyword>
<keyword id="KW-1185">Reference proteome</keyword>
<sequence>MLWEFFALFAIAAALFYRWASANNDFFKDRGIAYEKPVLYFGNMAGMFLRKRAMFDIVCDLYTKGGSKKFFGIFEQRQPLLMVRDPDLIKQITIKDFDHFINHRNVFATSSDDDPHDMSNLFGSSLFSMRDARWKDMRSTLSPAFTGSKMRQMFQLMNQVAKEAVDCLKQDDSRVQENELDMKDYCTRFTNDVIASTAFGLQVNSFKDRENTFYQMGKKLTTFTFLQSMKFMLFFALKGLNKILKVELFDRKSTQYFVRLVLDAMKYRQEHNIVRPDMINMLMEARGIIQTEKTKASAVREWSDRDIVAQCFVFFFAGFETSAVLMCFTAHELMENQDVQQRLYEEVQQVDQDLEGKELTYEAIMGMKYLDQVVNEVLRKWPAAIAVDRECNKDITFDVDGQKVEVKKGDVIWLPTCGFHRDPKYFENPMKFDPERFSDENKESIQPFTYFPFGLGQRNCIGSRFALLEAKAVIYYLLKDYRFAPAKKSCIPLELITSGFQLSPKGGFWIKLVQRN</sequence>
<accession>Q9VG82</accession>
<comment type="function">
    <text evidence="1">May be involved in the metabolism of insect hormones and in the breakdown of synthetic insecticides.</text>
</comment>
<comment type="cofactor">
    <cofactor evidence="1">
        <name>heme</name>
        <dbReference type="ChEBI" id="CHEBI:30413"/>
    </cofactor>
</comment>
<comment type="subcellular location">
    <subcellularLocation>
        <location evidence="2">Endoplasmic reticulum membrane</location>
        <topology evidence="2">Peripheral membrane protein</topology>
    </subcellularLocation>
    <subcellularLocation>
        <location evidence="2">Microsome membrane</location>
        <topology evidence="2">Peripheral membrane protein</topology>
    </subcellularLocation>
</comment>
<comment type="alternative products">
    <event type="alternative splicing"/>
    <isoform>
        <id>Q9VG82-1</id>
        <name>A</name>
        <sequence type="displayed"/>
    </isoform>
    <isoform>
        <id>Q9VG82-2</id>
        <name>B</name>
        <sequence type="described" ref="VSP_010295"/>
    </isoform>
</comment>
<comment type="similarity">
    <text evidence="2">Belongs to the cytochrome P450 family.</text>
</comment>
<gene>
    <name type="primary">Cyp9f2</name>
    <name type="ORF">CG11466</name>
</gene>
<evidence type="ECO:0000250" key="1"/>
<evidence type="ECO:0000305" key="2"/>
<dbReference type="EC" id="1.14.-.-"/>
<dbReference type="EMBL" id="AE014297">
    <property type="protein sequence ID" value="AAF54803.1"/>
    <property type="molecule type" value="Genomic_DNA"/>
</dbReference>
<dbReference type="EMBL" id="AE014297">
    <property type="protein sequence ID" value="AAS65143.1"/>
    <property type="molecule type" value="Genomic_DNA"/>
</dbReference>
<dbReference type="EMBL" id="AY058466">
    <property type="protein sequence ID" value="AAL13695.1"/>
    <property type="molecule type" value="mRNA"/>
</dbReference>
<dbReference type="RefSeq" id="NP_650189.1">
    <molecule id="Q9VG82-1"/>
    <property type="nucleotide sequence ID" value="NM_141932.3"/>
</dbReference>
<dbReference type="SMR" id="Q9VG82"/>
<dbReference type="BioGRID" id="66620">
    <property type="interactions" value="31"/>
</dbReference>
<dbReference type="DIP" id="DIP-18506N"/>
<dbReference type="FunCoup" id="Q9VG82">
    <property type="interactions" value="54"/>
</dbReference>
<dbReference type="IntAct" id="Q9VG82">
    <property type="interactions" value="2"/>
</dbReference>
<dbReference type="STRING" id="7227.FBpp0082070"/>
<dbReference type="PaxDb" id="7227-FBpp0082070"/>
<dbReference type="DNASU" id="41520"/>
<dbReference type="EnsemblMetazoa" id="FBtr0082598">
    <molecule id="Q9VG82-1"/>
    <property type="protein sequence ID" value="FBpp0082070"/>
    <property type="gene ID" value="FBgn0038037"/>
</dbReference>
<dbReference type="GeneID" id="41520"/>
<dbReference type="KEGG" id="dme:Dmel_CG11466"/>
<dbReference type="UCSC" id="CG11466-RA">
    <molecule id="Q9VG82-1"/>
    <property type="organism name" value="d. melanogaster"/>
</dbReference>
<dbReference type="AGR" id="FB:FBgn0038037"/>
<dbReference type="CTD" id="41520"/>
<dbReference type="FlyBase" id="FBgn0038037">
    <property type="gene designation" value="Cyp9f2"/>
</dbReference>
<dbReference type="VEuPathDB" id="VectorBase:FBgn0038037"/>
<dbReference type="eggNOG" id="KOG0158">
    <property type="taxonomic scope" value="Eukaryota"/>
</dbReference>
<dbReference type="GeneTree" id="ENSGT00940000165057"/>
<dbReference type="HOGENOM" id="CLU_001570_5_2_1"/>
<dbReference type="InParanoid" id="Q9VG82"/>
<dbReference type="OMA" id="MLEWAWL"/>
<dbReference type="OrthoDB" id="2789670at2759"/>
<dbReference type="PhylomeDB" id="Q9VG82"/>
<dbReference type="SignaLink" id="Q9VG82"/>
<dbReference type="BioGRID-ORCS" id="41520">
    <property type="hits" value="0 hits in 3 CRISPR screens"/>
</dbReference>
<dbReference type="GenomeRNAi" id="41520"/>
<dbReference type="PRO" id="PR:Q9VG82"/>
<dbReference type="Proteomes" id="UP000000803">
    <property type="component" value="Chromosome 3R"/>
</dbReference>
<dbReference type="Bgee" id="FBgn0038037">
    <property type="expression patterns" value="Expressed in oviduct (Drosophila) and 132 other cell types or tissues"/>
</dbReference>
<dbReference type="ExpressionAtlas" id="Q9VG82">
    <property type="expression patterns" value="baseline and differential"/>
</dbReference>
<dbReference type="GO" id="GO:0005789">
    <property type="term" value="C:endoplasmic reticulum membrane"/>
    <property type="evidence" value="ECO:0007669"/>
    <property type="project" value="UniProtKB-SubCell"/>
</dbReference>
<dbReference type="GO" id="GO:0020037">
    <property type="term" value="F:heme binding"/>
    <property type="evidence" value="ECO:0007669"/>
    <property type="project" value="InterPro"/>
</dbReference>
<dbReference type="GO" id="GO:0005506">
    <property type="term" value="F:iron ion binding"/>
    <property type="evidence" value="ECO:0007669"/>
    <property type="project" value="InterPro"/>
</dbReference>
<dbReference type="GO" id="GO:0004497">
    <property type="term" value="F:monooxygenase activity"/>
    <property type="evidence" value="ECO:0007669"/>
    <property type="project" value="UniProtKB-KW"/>
</dbReference>
<dbReference type="GO" id="GO:0016705">
    <property type="term" value="F:oxidoreductase activity, acting on paired donors, with incorporation or reduction of molecular oxygen"/>
    <property type="evidence" value="ECO:0007669"/>
    <property type="project" value="InterPro"/>
</dbReference>
<dbReference type="GO" id="GO:0035220">
    <property type="term" value="P:wing disc development"/>
    <property type="evidence" value="ECO:0000315"/>
    <property type="project" value="FlyBase"/>
</dbReference>
<dbReference type="CDD" id="cd11056">
    <property type="entry name" value="CYP6-like"/>
    <property type="match status" value="1"/>
</dbReference>
<dbReference type="FunFam" id="1.10.630.10:FF:000042">
    <property type="entry name" value="Cytochrome P450"/>
    <property type="match status" value="1"/>
</dbReference>
<dbReference type="Gene3D" id="1.10.630.10">
    <property type="entry name" value="Cytochrome P450"/>
    <property type="match status" value="1"/>
</dbReference>
<dbReference type="InterPro" id="IPR001128">
    <property type="entry name" value="Cyt_P450"/>
</dbReference>
<dbReference type="InterPro" id="IPR017972">
    <property type="entry name" value="Cyt_P450_CS"/>
</dbReference>
<dbReference type="InterPro" id="IPR002401">
    <property type="entry name" value="Cyt_P450_E_grp-I"/>
</dbReference>
<dbReference type="InterPro" id="IPR036396">
    <property type="entry name" value="Cyt_P450_sf"/>
</dbReference>
<dbReference type="InterPro" id="IPR050476">
    <property type="entry name" value="Insect_CytP450_Detox"/>
</dbReference>
<dbReference type="PANTHER" id="PTHR24292:SF54">
    <property type="entry name" value="CYP9F3-RELATED"/>
    <property type="match status" value="1"/>
</dbReference>
<dbReference type="PANTHER" id="PTHR24292">
    <property type="entry name" value="CYTOCHROME P450"/>
    <property type="match status" value="1"/>
</dbReference>
<dbReference type="Pfam" id="PF00067">
    <property type="entry name" value="p450"/>
    <property type="match status" value="1"/>
</dbReference>
<dbReference type="PRINTS" id="PR00463">
    <property type="entry name" value="EP450I"/>
</dbReference>
<dbReference type="PRINTS" id="PR00385">
    <property type="entry name" value="P450"/>
</dbReference>
<dbReference type="SUPFAM" id="SSF48264">
    <property type="entry name" value="Cytochrome P450"/>
    <property type="match status" value="1"/>
</dbReference>
<dbReference type="PROSITE" id="PS00086">
    <property type="entry name" value="CYTOCHROME_P450"/>
    <property type="match status" value="1"/>
</dbReference>
<feature type="chain" id="PRO_0000051920" description="Probable cytochrome P450 9f2">
    <location>
        <begin position="1"/>
        <end position="516"/>
    </location>
</feature>
<feature type="binding site" description="axial binding residue" evidence="1">
    <location>
        <position position="460"/>
    </location>
    <ligand>
        <name>heme</name>
        <dbReference type="ChEBI" id="CHEBI:30413"/>
    </ligand>
    <ligandPart>
        <name>Fe</name>
        <dbReference type="ChEBI" id="CHEBI:18248"/>
    </ligandPart>
</feature>
<feature type="splice variant" id="VSP_010295" description="In isoform B." evidence="2">
    <location>
        <begin position="1"/>
        <end position="81"/>
    </location>
</feature>
<reference key="1">
    <citation type="journal article" date="2000" name="Science">
        <title>The genome sequence of Drosophila melanogaster.</title>
        <authorList>
            <person name="Adams M.D."/>
            <person name="Celniker S.E."/>
            <person name="Holt R.A."/>
            <person name="Evans C.A."/>
            <person name="Gocayne J.D."/>
            <person name="Amanatides P.G."/>
            <person name="Scherer S.E."/>
            <person name="Li P.W."/>
            <person name="Hoskins R.A."/>
            <person name="Galle R.F."/>
            <person name="George R.A."/>
            <person name="Lewis S.E."/>
            <person name="Richards S."/>
            <person name="Ashburner M."/>
            <person name="Henderson S.N."/>
            <person name="Sutton G.G."/>
            <person name="Wortman J.R."/>
            <person name="Yandell M.D."/>
            <person name="Zhang Q."/>
            <person name="Chen L.X."/>
            <person name="Brandon R.C."/>
            <person name="Rogers Y.-H.C."/>
            <person name="Blazej R.G."/>
            <person name="Champe M."/>
            <person name="Pfeiffer B.D."/>
            <person name="Wan K.H."/>
            <person name="Doyle C."/>
            <person name="Baxter E.G."/>
            <person name="Helt G."/>
            <person name="Nelson C.R."/>
            <person name="Miklos G.L.G."/>
            <person name="Abril J.F."/>
            <person name="Agbayani A."/>
            <person name="An H.-J."/>
            <person name="Andrews-Pfannkoch C."/>
            <person name="Baldwin D."/>
            <person name="Ballew R.M."/>
            <person name="Basu A."/>
            <person name="Baxendale J."/>
            <person name="Bayraktaroglu L."/>
            <person name="Beasley E.M."/>
            <person name="Beeson K.Y."/>
            <person name="Benos P.V."/>
            <person name="Berman B.P."/>
            <person name="Bhandari D."/>
            <person name="Bolshakov S."/>
            <person name="Borkova D."/>
            <person name="Botchan M.R."/>
            <person name="Bouck J."/>
            <person name="Brokstein P."/>
            <person name="Brottier P."/>
            <person name="Burtis K.C."/>
            <person name="Busam D.A."/>
            <person name="Butler H."/>
            <person name="Cadieu E."/>
            <person name="Center A."/>
            <person name="Chandra I."/>
            <person name="Cherry J.M."/>
            <person name="Cawley S."/>
            <person name="Dahlke C."/>
            <person name="Davenport L.B."/>
            <person name="Davies P."/>
            <person name="de Pablos B."/>
            <person name="Delcher A."/>
            <person name="Deng Z."/>
            <person name="Mays A.D."/>
            <person name="Dew I."/>
            <person name="Dietz S.M."/>
            <person name="Dodson K."/>
            <person name="Doup L.E."/>
            <person name="Downes M."/>
            <person name="Dugan-Rocha S."/>
            <person name="Dunkov B.C."/>
            <person name="Dunn P."/>
            <person name="Durbin K.J."/>
            <person name="Evangelista C.C."/>
            <person name="Ferraz C."/>
            <person name="Ferriera S."/>
            <person name="Fleischmann W."/>
            <person name="Fosler C."/>
            <person name="Gabrielian A.E."/>
            <person name="Garg N.S."/>
            <person name="Gelbart W.M."/>
            <person name="Glasser K."/>
            <person name="Glodek A."/>
            <person name="Gong F."/>
            <person name="Gorrell J.H."/>
            <person name="Gu Z."/>
            <person name="Guan P."/>
            <person name="Harris M."/>
            <person name="Harris N.L."/>
            <person name="Harvey D.A."/>
            <person name="Heiman T.J."/>
            <person name="Hernandez J.R."/>
            <person name="Houck J."/>
            <person name="Hostin D."/>
            <person name="Houston K.A."/>
            <person name="Howland T.J."/>
            <person name="Wei M.-H."/>
            <person name="Ibegwam C."/>
            <person name="Jalali M."/>
            <person name="Kalush F."/>
            <person name="Karpen G.H."/>
            <person name="Ke Z."/>
            <person name="Kennison J.A."/>
            <person name="Ketchum K.A."/>
            <person name="Kimmel B.E."/>
            <person name="Kodira C.D."/>
            <person name="Kraft C.L."/>
            <person name="Kravitz S."/>
            <person name="Kulp D."/>
            <person name="Lai Z."/>
            <person name="Lasko P."/>
            <person name="Lei Y."/>
            <person name="Levitsky A.A."/>
            <person name="Li J.H."/>
            <person name="Li Z."/>
            <person name="Liang Y."/>
            <person name="Lin X."/>
            <person name="Liu X."/>
            <person name="Mattei B."/>
            <person name="McIntosh T.C."/>
            <person name="McLeod M.P."/>
            <person name="McPherson D."/>
            <person name="Merkulov G."/>
            <person name="Milshina N.V."/>
            <person name="Mobarry C."/>
            <person name="Morris J."/>
            <person name="Moshrefi A."/>
            <person name="Mount S.M."/>
            <person name="Moy M."/>
            <person name="Murphy B."/>
            <person name="Murphy L."/>
            <person name="Muzny D.M."/>
            <person name="Nelson D.L."/>
            <person name="Nelson D.R."/>
            <person name="Nelson K.A."/>
            <person name="Nixon K."/>
            <person name="Nusskern D.R."/>
            <person name="Pacleb J.M."/>
            <person name="Palazzolo M."/>
            <person name="Pittman G.S."/>
            <person name="Pan S."/>
            <person name="Pollard J."/>
            <person name="Puri V."/>
            <person name="Reese M.G."/>
            <person name="Reinert K."/>
            <person name="Remington K."/>
            <person name="Saunders R.D.C."/>
            <person name="Scheeler F."/>
            <person name="Shen H."/>
            <person name="Shue B.C."/>
            <person name="Siden-Kiamos I."/>
            <person name="Simpson M."/>
            <person name="Skupski M.P."/>
            <person name="Smith T.J."/>
            <person name="Spier E."/>
            <person name="Spradling A.C."/>
            <person name="Stapleton M."/>
            <person name="Strong R."/>
            <person name="Sun E."/>
            <person name="Svirskas R."/>
            <person name="Tector C."/>
            <person name="Turner R."/>
            <person name="Venter E."/>
            <person name="Wang A.H."/>
            <person name="Wang X."/>
            <person name="Wang Z.-Y."/>
            <person name="Wassarman D.A."/>
            <person name="Weinstock G.M."/>
            <person name="Weissenbach J."/>
            <person name="Williams S.M."/>
            <person name="Woodage T."/>
            <person name="Worley K.C."/>
            <person name="Wu D."/>
            <person name="Yang S."/>
            <person name="Yao Q.A."/>
            <person name="Ye J."/>
            <person name="Yeh R.-F."/>
            <person name="Zaveri J.S."/>
            <person name="Zhan M."/>
            <person name="Zhang G."/>
            <person name="Zhao Q."/>
            <person name="Zheng L."/>
            <person name="Zheng X.H."/>
            <person name="Zhong F.N."/>
            <person name="Zhong W."/>
            <person name="Zhou X."/>
            <person name="Zhu S.C."/>
            <person name="Zhu X."/>
            <person name="Smith H.O."/>
            <person name="Gibbs R.A."/>
            <person name="Myers E.W."/>
            <person name="Rubin G.M."/>
            <person name="Venter J.C."/>
        </authorList>
    </citation>
    <scope>NUCLEOTIDE SEQUENCE [LARGE SCALE GENOMIC DNA]</scope>
    <source>
        <strain>Berkeley</strain>
    </source>
</reference>
<reference key="2">
    <citation type="journal article" date="2002" name="Genome Biol.">
        <title>Annotation of the Drosophila melanogaster euchromatic genome: a systematic review.</title>
        <authorList>
            <person name="Misra S."/>
            <person name="Crosby M.A."/>
            <person name="Mungall C.J."/>
            <person name="Matthews B.B."/>
            <person name="Campbell K.S."/>
            <person name="Hradecky P."/>
            <person name="Huang Y."/>
            <person name="Kaminker J.S."/>
            <person name="Millburn G.H."/>
            <person name="Prochnik S.E."/>
            <person name="Smith C.D."/>
            <person name="Tupy J.L."/>
            <person name="Whitfield E.J."/>
            <person name="Bayraktaroglu L."/>
            <person name="Berman B.P."/>
            <person name="Bettencourt B.R."/>
            <person name="Celniker S.E."/>
            <person name="de Grey A.D.N.J."/>
            <person name="Drysdale R.A."/>
            <person name="Harris N.L."/>
            <person name="Richter J."/>
            <person name="Russo S."/>
            <person name="Schroeder A.J."/>
            <person name="Shu S.Q."/>
            <person name="Stapleton M."/>
            <person name="Yamada C."/>
            <person name="Ashburner M."/>
            <person name="Gelbart W.M."/>
            <person name="Rubin G.M."/>
            <person name="Lewis S.E."/>
        </authorList>
    </citation>
    <scope>GENOME REANNOTATION</scope>
    <scope>ALTERNATIVE SPLICING</scope>
    <source>
        <strain>Berkeley</strain>
    </source>
</reference>
<reference key="3">
    <citation type="journal article" date="2002" name="Genome Biol.">
        <title>A Drosophila full-length cDNA resource.</title>
        <authorList>
            <person name="Stapleton M."/>
            <person name="Carlson J.W."/>
            <person name="Brokstein P."/>
            <person name="Yu C."/>
            <person name="Champe M."/>
            <person name="George R.A."/>
            <person name="Guarin H."/>
            <person name="Kronmiller B."/>
            <person name="Pacleb J.M."/>
            <person name="Park S."/>
            <person name="Wan K.H."/>
            <person name="Rubin G.M."/>
            <person name="Celniker S.E."/>
        </authorList>
    </citation>
    <scope>NUCLEOTIDE SEQUENCE [LARGE SCALE MRNA] (ISOFORM A)</scope>
    <source>
        <strain>Berkeley</strain>
        <tissue>Head</tissue>
    </source>
</reference>
<protein>
    <recommendedName>
        <fullName>Probable cytochrome P450 9f2</fullName>
        <ecNumber>1.14.-.-</ecNumber>
    </recommendedName>
    <alternativeName>
        <fullName>CYPIXF2</fullName>
    </alternativeName>
</protein>
<proteinExistence type="evidence at transcript level"/>
<name>CP9F2_DROME</name>